<feature type="chain" id="PRO_1000147368" description="Nucleotide-binding protein SEQ_0857">
    <location>
        <begin position="1"/>
        <end position="296"/>
    </location>
</feature>
<feature type="binding site" evidence="1">
    <location>
        <begin position="13"/>
        <end position="20"/>
    </location>
    <ligand>
        <name>ATP</name>
        <dbReference type="ChEBI" id="CHEBI:30616"/>
    </ligand>
</feature>
<feature type="binding site" evidence="1">
    <location>
        <begin position="63"/>
        <end position="66"/>
    </location>
    <ligand>
        <name>GTP</name>
        <dbReference type="ChEBI" id="CHEBI:37565"/>
    </ligand>
</feature>
<name>Y857_STRE4</name>
<protein>
    <recommendedName>
        <fullName evidence="1">Nucleotide-binding protein SEQ_0857</fullName>
    </recommendedName>
</protein>
<evidence type="ECO:0000255" key="1">
    <source>
        <dbReference type="HAMAP-Rule" id="MF_00636"/>
    </source>
</evidence>
<keyword id="KW-0067">ATP-binding</keyword>
<keyword id="KW-0342">GTP-binding</keyword>
<keyword id="KW-0547">Nucleotide-binding</keyword>
<sequence length="296" mass="33705">MSDKQINLVIVTGMSGAGKTVAIQSFEDLGYFTVDNMPPALVPKFLELLERTNETQKVALVVDMRSRRFFKEINSILDHIELNANLKLRILFLDATDSELVSRYKETRRSHPLAADGRVLDGIRRERELLVPLKSMSQHVVNTTDLTPRQLRKVISDQFSSESDQASFRIEVMSFGFKYGLPLDADLVFDVRFLPNPYYQVALREQTGLDQAVFDYVMTHQESEAFYNHLLGLIVPILPAYQKEGKSVLTIAIGCTGGQHRSVAFAHRLAQDLTADWPLHESHRDINRRKETVNRS</sequence>
<proteinExistence type="inferred from homology"/>
<accession>C0MBQ7</accession>
<reference key="1">
    <citation type="journal article" date="2009" name="PLoS Pathog.">
        <title>Genomic evidence for the evolution of Streptococcus equi: host restriction, increased virulence, and genetic exchange with human pathogens.</title>
        <authorList>
            <person name="Holden M.T.G."/>
            <person name="Heather Z."/>
            <person name="Paillot R."/>
            <person name="Steward K.F."/>
            <person name="Webb K."/>
            <person name="Ainslie F."/>
            <person name="Jourdan T."/>
            <person name="Bason N.C."/>
            <person name="Holroyd N.E."/>
            <person name="Mungall K."/>
            <person name="Quail M.A."/>
            <person name="Sanders M."/>
            <person name="Simmonds M."/>
            <person name="Willey D."/>
            <person name="Brooks K."/>
            <person name="Aanensen D.M."/>
            <person name="Spratt B.G."/>
            <person name="Jolley K.A."/>
            <person name="Maiden M.C.J."/>
            <person name="Kehoe M."/>
            <person name="Chanter N."/>
            <person name="Bentley S.D."/>
            <person name="Robinson C."/>
            <person name="Maskell D.J."/>
            <person name="Parkhill J."/>
            <person name="Waller A.S."/>
        </authorList>
    </citation>
    <scope>NUCLEOTIDE SEQUENCE [LARGE SCALE GENOMIC DNA]</scope>
    <source>
        <strain>4047</strain>
    </source>
</reference>
<organism>
    <name type="scientific">Streptococcus equi subsp. equi (strain 4047)</name>
    <dbReference type="NCBI Taxonomy" id="553482"/>
    <lineage>
        <taxon>Bacteria</taxon>
        <taxon>Bacillati</taxon>
        <taxon>Bacillota</taxon>
        <taxon>Bacilli</taxon>
        <taxon>Lactobacillales</taxon>
        <taxon>Streptococcaceae</taxon>
        <taxon>Streptococcus</taxon>
    </lineage>
</organism>
<dbReference type="EMBL" id="FM204883">
    <property type="protein sequence ID" value="CAW93330.1"/>
    <property type="molecule type" value="Genomic_DNA"/>
</dbReference>
<dbReference type="SMR" id="C0MBQ7"/>
<dbReference type="KEGG" id="seu:SEQ_0857"/>
<dbReference type="HOGENOM" id="CLU_059558_0_0_9"/>
<dbReference type="OrthoDB" id="9784461at2"/>
<dbReference type="Proteomes" id="UP000001365">
    <property type="component" value="Chromosome"/>
</dbReference>
<dbReference type="GO" id="GO:0005524">
    <property type="term" value="F:ATP binding"/>
    <property type="evidence" value="ECO:0007669"/>
    <property type="project" value="UniProtKB-UniRule"/>
</dbReference>
<dbReference type="GO" id="GO:0005525">
    <property type="term" value="F:GTP binding"/>
    <property type="evidence" value="ECO:0007669"/>
    <property type="project" value="UniProtKB-UniRule"/>
</dbReference>
<dbReference type="Gene3D" id="3.40.50.300">
    <property type="entry name" value="P-loop containing nucleotide triphosphate hydrolases"/>
    <property type="match status" value="1"/>
</dbReference>
<dbReference type="HAMAP" id="MF_00636">
    <property type="entry name" value="RapZ_like"/>
    <property type="match status" value="1"/>
</dbReference>
<dbReference type="InterPro" id="IPR027417">
    <property type="entry name" value="P-loop_NTPase"/>
</dbReference>
<dbReference type="InterPro" id="IPR005337">
    <property type="entry name" value="RapZ-like"/>
</dbReference>
<dbReference type="InterPro" id="IPR053930">
    <property type="entry name" value="RapZ-like_N"/>
</dbReference>
<dbReference type="InterPro" id="IPR053931">
    <property type="entry name" value="RapZ_C"/>
</dbReference>
<dbReference type="NCBIfam" id="NF003828">
    <property type="entry name" value="PRK05416.1"/>
    <property type="match status" value="1"/>
</dbReference>
<dbReference type="PANTHER" id="PTHR30448">
    <property type="entry name" value="RNASE ADAPTER PROTEIN RAPZ"/>
    <property type="match status" value="1"/>
</dbReference>
<dbReference type="PANTHER" id="PTHR30448:SF0">
    <property type="entry name" value="RNASE ADAPTER PROTEIN RAPZ"/>
    <property type="match status" value="1"/>
</dbReference>
<dbReference type="Pfam" id="PF22740">
    <property type="entry name" value="PapZ_C"/>
    <property type="match status" value="1"/>
</dbReference>
<dbReference type="Pfam" id="PF03668">
    <property type="entry name" value="RapZ-like_N"/>
    <property type="match status" value="1"/>
</dbReference>
<dbReference type="PIRSF" id="PIRSF005052">
    <property type="entry name" value="P-loopkin"/>
    <property type="match status" value="1"/>
</dbReference>
<dbReference type="SUPFAM" id="SSF52540">
    <property type="entry name" value="P-loop containing nucleoside triphosphate hydrolases"/>
    <property type="match status" value="1"/>
</dbReference>
<gene>
    <name type="ordered locus">SEQ_0857</name>
</gene>
<comment type="function">
    <text evidence="1">Displays ATPase and GTPase activities.</text>
</comment>
<comment type="similarity">
    <text evidence="1">Belongs to the RapZ-like family.</text>
</comment>